<organism>
    <name type="scientific">Bos taurus</name>
    <name type="common">Bovine</name>
    <dbReference type="NCBI Taxonomy" id="9913"/>
    <lineage>
        <taxon>Eukaryota</taxon>
        <taxon>Metazoa</taxon>
        <taxon>Chordata</taxon>
        <taxon>Craniata</taxon>
        <taxon>Vertebrata</taxon>
        <taxon>Euteleostomi</taxon>
        <taxon>Mammalia</taxon>
        <taxon>Eutheria</taxon>
        <taxon>Laurasiatheria</taxon>
        <taxon>Artiodactyla</taxon>
        <taxon>Ruminantia</taxon>
        <taxon>Pecora</taxon>
        <taxon>Bovidae</taxon>
        <taxon>Bovinae</taxon>
        <taxon>Bos</taxon>
    </lineage>
</organism>
<keyword id="KW-0007">Acetylation</keyword>
<keyword id="KW-0175">Coiled coil</keyword>
<keyword id="KW-0963">Cytoplasm</keyword>
<keyword id="KW-0539">Nucleus</keyword>
<keyword id="KW-1185">Reference proteome</keyword>
<keyword id="KW-0736">Signalosome</keyword>
<sequence>MAGEQKPSSNLLEQFILLAKGTSGSALTALISQVLEAPGVYVFGELLELANVQELAEGANAAYLQLLNLFAYGTYPDYIANKESLPELSTAQQNKLKHLTIVSLASRMKCIPYSVLLKDLEMRNLRELEDLIIEAVYTDIIQGKLDQRNQLLEVDFCIGRDIRKKDINNIVKTLHEWCDGCEAVLLGIEQQVLRANQYKENHSRTQQQVEAEVTNIKKTLKATASSSAQEMEQQLAERECPPHAEQRQPTKKMSKVKGLVSSRH</sequence>
<proteinExistence type="evidence at transcript level"/>
<name>CSN7B_BOVIN</name>
<accession>Q2KI56</accession>
<feature type="initiator methionine" description="Removed" evidence="2">
    <location>
        <position position="1"/>
    </location>
</feature>
<feature type="chain" id="PRO_0000290347" description="COP9 signalosome complex subunit 7b">
    <location>
        <begin position="2"/>
        <end position="264"/>
    </location>
</feature>
<feature type="domain" description="PCI" evidence="4">
    <location>
        <begin position="2"/>
        <end position="159"/>
    </location>
</feature>
<feature type="region of interest" description="Disordered" evidence="5">
    <location>
        <begin position="223"/>
        <end position="264"/>
    </location>
</feature>
<feature type="coiled-coil region" evidence="3">
    <location>
        <begin position="194"/>
        <end position="237"/>
    </location>
</feature>
<feature type="compositionally biased region" description="Polar residues" evidence="5">
    <location>
        <begin position="223"/>
        <end position="232"/>
    </location>
</feature>
<feature type="compositionally biased region" description="Basic and acidic residues" evidence="5">
    <location>
        <begin position="235"/>
        <end position="248"/>
    </location>
</feature>
<feature type="modified residue" description="N-acetylalanine" evidence="2">
    <location>
        <position position="2"/>
    </location>
</feature>
<protein>
    <recommendedName>
        <fullName>COP9 signalosome complex subunit 7b</fullName>
        <shortName>SGN7b</shortName>
        <shortName>Signalosome subunit 7b</shortName>
    </recommendedName>
</protein>
<reference key="1">
    <citation type="submission" date="2006-01" db="EMBL/GenBank/DDBJ databases">
        <authorList>
            <consortium name="NIH - Mammalian Gene Collection (MGC) project"/>
        </authorList>
    </citation>
    <scope>NUCLEOTIDE SEQUENCE [LARGE SCALE MRNA]</scope>
    <source>
        <strain>Hereford</strain>
        <tissue>Heart ventricle</tissue>
    </source>
</reference>
<evidence type="ECO:0000250" key="1"/>
<evidence type="ECO:0000250" key="2">
    <source>
        <dbReference type="UniProtKB" id="Q9H9Q2"/>
    </source>
</evidence>
<evidence type="ECO:0000255" key="3"/>
<evidence type="ECO:0000255" key="4">
    <source>
        <dbReference type="PROSITE-ProRule" id="PRU01185"/>
    </source>
</evidence>
<evidence type="ECO:0000256" key="5">
    <source>
        <dbReference type="SAM" id="MobiDB-lite"/>
    </source>
</evidence>
<evidence type="ECO:0000305" key="6"/>
<gene>
    <name type="primary">COPS7B</name>
</gene>
<dbReference type="EMBL" id="BC112763">
    <property type="protein sequence ID" value="AAI12764.1"/>
    <property type="molecule type" value="mRNA"/>
</dbReference>
<dbReference type="RefSeq" id="NP_001040077.1">
    <property type="nucleotide sequence ID" value="NM_001046612.1"/>
</dbReference>
<dbReference type="RefSeq" id="XP_005203065.1">
    <property type="nucleotide sequence ID" value="XM_005203008.3"/>
</dbReference>
<dbReference type="SMR" id="Q2KI56"/>
<dbReference type="FunCoup" id="Q2KI56">
    <property type="interactions" value="4891"/>
</dbReference>
<dbReference type="STRING" id="9913.ENSBTAP00000062473"/>
<dbReference type="PaxDb" id="9913-ENSBTAP00000006858"/>
<dbReference type="GeneID" id="617995"/>
<dbReference type="KEGG" id="bta:617995"/>
<dbReference type="CTD" id="64708"/>
<dbReference type="VEuPathDB" id="HostDB:ENSBTAG00000005207"/>
<dbReference type="eggNOG" id="KOG3250">
    <property type="taxonomic scope" value="Eukaryota"/>
</dbReference>
<dbReference type="HOGENOM" id="CLU_054426_1_0_1"/>
<dbReference type="InParanoid" id="Q2KI56"/>
<dbReference type="OMA" id="GTYKQFR"/>
<dbReference type="OrthoDB" id="10265275at2759"/>
<dbReference type="TreeFam" id="TF101149"/>
<dbReference type="Reactome" id="R-BTA-5696394">
    <property type="pathway name" value="DNA Damage Recognition in GG-NER"/>
</dbReference>
<dbReference type="Reactome" id="R-BTA-6781823">
    <property type="pathway name" value="Formation of TC-NER Pre-Incision Complex"/>
</dbReference>
<dbReference type="Reactome" id="R-BTA-8856825">
    <property type="pathway name" value="Cargo recognition for clathrin-mediated endocytosis"/>
</dbReference>
<dbReference type="Reactome" id="R-BTA-8951664">
    <property type="pathway name" value="Neddylation"/>
</dbReference>
<dbReference type="Proteomes" id="UP000009136">
    <property type="component" value="Chromosome 2"/>
</dbReference>
<dbReference type="Bgee" id="ENSBTAG00000005207">
    <property type="expression patterns" value="Expressed in choroid plexus and 103 other cell types or tissues"/>
</dbReference>
<dbReference type="GO" id="GO:0008180">
    <property type="term" value="C:COP9 signalosome"/>
    <property type="evidence" value="ECO:0000318"/>
    <property type="project" value="GO_Central"/>
</dbReference>
<dbReference type="GO" id="GO:0005737">
    <property type="term" value="C:cytoplasm"/>
    <property type="evidence" value="ECO:0007669"/>
    <property type="project" value="UniProtKB-SubCell"/>
</dbReference>
<dbReference type="GO" id="GO:0010387">
    <property type="term" value="P:COP9 signalosome assembly"/>
    <property type="evidence" value="ECO:0007669"/>
    <property type="project" value="InterPro"/>
</dbReference>
<dbReference type="InterPro" id="IPR045237">
    <property type="entry name" value="COPS7/eIF3m"/>
</dbReference>
<dbReference type="InterPro" id="IPR041481">
    <property type="entry name" value="CSN7_helixI"/>
</dbReference>
<dbReference type="InterPro" id="IPR000717">
    <property type="entry name" value="PCI_dom"/>
</dbReference>
<dbReference type="PANTHER" id="PTHR15350">
    <property type="entry name" value="COP9 SIGNALOSOME COMPLEX SUBUNIT 7/DENDRITIC CELL PROTEIN GA17"/>
    <property type="match status" value="1"/>
</dbReference>
<dbReference type="PANTHER" id="PTHR15350:SF8">
    <property type="entry name" value="COP9 SIGNALOSOME COMPLEX SUBUNIT 7B"/>
    <property type="match status" value="1"/>
</dbReference>
<dbReference type="Pfam" id="PF22061">
    <property type="entry name" value="CSN7_HB_subdom"/>
    <property type="match status" value="1"/>
</dbReference>
<dbReference type="Pfam" id="PF18392">
    <property type="entry name" value="CSN7a_helixI"/>
    <property type="match status" value="1"/>
</dbReference>
<dbReference type="Pfam" id="PF01399">
    <property type="entry name" value="PCI"/>
    <property type="match status" value="1"/>
</dbReference>
<dbReference type="SMART" id="SM00088">
    <property type="entry name" value="PINT"/>
    <property type="match status" value="1"/>
</dbReference>
<dbReference type="PROSITE" id="PS50250">
    <property type="entry name" value="PCI"/>
    <property type="match status" value="1"/>
</dbReference>
<comment type="function">
    <text evidence="1">Component of the COP9 signalosome complex (CSN), a complex involved in various cellular and developmental processes. The CSN complex is an essential regulator of the ubiquitin (Ubl) conjugation pathway by mediating the deneddylation of the cullin subunits of SCF-type E3 ligase complexes, leading to decrease the Ubl ligase activity of SCF-type complexes such as SCF, CSA or DDB2. The complex is also involved in phosphorylation of p53/TP53, JUN, I-kappa-B-alpha/NFKBIA, ITPK1 and IRF8/ICSBP, possibly via its association with CK2 and PKD kinases. CSN-dependent phosphorylation of TP53 and JUN promotes and protects degradation by the Ubl system, respectively (By similarity).</text>
</comment>
<comment type="subunit">
    <text evidence="2">Component of the CSN complex, composed of COPS1/GPS1, COPS2, COPS3, COPS4, COPS5, COPS6, COPS7 (COPS7A or COPS7B), COPS8 and COPS9. In the complex, it probably interacts directly with COPS1, COPS2, COPS4, COPS5, COPS6 and COPS8. Interacts with EIF3S6.</text>
</comment>
<comment type="subcellular location">
    <subcellularLocation>
        <location evidence="1">Cytoplasm</location>
    </subcellularLocation>
    <subcellularLocation>
        <location evidence="1">Nucleus</location>
    </subcellularLocation>
</comment>
<comment type="similarity">
    <text evidence="6">Belongs to the CSN7/EIF3M family. CSN7 subfamily.</text>
</comment>